<keyword id="KW-0040">ANK repeat</keyword>
<keyword id="KW-0217">Developmental protein</keyword>
<keyword id="KW-0914">Notch signaling pathway</keyword>
<keyword id="KW-1185">Reference proteome</keyword>
<keyword id="KW-0677">Repeat</keyword>
<keyword id="KW-0804">Transcription</keyword>
<keyword id="KW-0805">Transcription regulation</keyword>
<gene>
    <name type="primary">nrarp</name>
</gene>
<organism>
    <name type="scientific">Xenopus tropicalis</name>
    <name type="common">Western clawed frog</name>
    <name type="synonym">Silurana tropicalis</name>
    <dbReference type="NCBI Taxonomy" id="8364"/>
    <lineage>
        <taxon>Eukaryota</taxon>
        <taxon>Metazoa</taxon>
        <taxon>Chordata</taxon>
        <taxon>Craniata</taxon>
        <taxon>Vertebrata</taxon>
        <taxon>Euteleostomi</taxon>
        <taxon>Amphibia</taxon>
        <taxon>Batrachia</taxon>
        <taxon>Anura</taxon>
        <taxon>Pipoidea</taxon>
        <taxon>Pipidae</taxon>
        <taxon>Xenopodinae</taxon>
        <taxon>Xenopus</taxon>
        <taxon>Silurana</taxon>
    </lineage>
</organism>
<reference key="1">
    <citation type="submission" date="2007-03" db="EMBL/GenBank/DDBJ databases">
        <authorList>
            <consortium name="NIH - Xenopus Gene Collection (XGC) project"/>
        </authorList>
    </citation>
    <scope>NUCLEOTIDE SEQUENCE [LARGE SCALE MRNA]</scope>
    <source>
        <tissue>Embryo</tissue>
    </source>
</reference>
<feature type="chain" id="PRO_0000325084" description="Notch-regulated ankyrin repeat-containing protein">
    <location>
        <begin position="1"/>
        <end position="114"/>
    </location>
</feature>
<feature type="repeat" description="ANK 1">
    <location>
        <begin position="50"/>
        <end position="79"/>
    </location>
</feature>
<feature type="repeat" description="ANK 2">
    <location>
        <begin position="83"/>
        <end position="112"/>
    </location>
</feature>
<evidence type="ECO:0000250" key="1"/>
<evidence type="ECO:0000250" key="2">
    <source>
        <dbReference type="UniProtKB" id="Q5U5A6"/>
    </source>
</evidence>
<evidence type="ECO:0000250" key="3">
    <source>
        <dbReference type="UniProtKB" id="Q7T3Y0"/>
    </source>
</evidence>
<evidence type="ECO:0000250" key="4">
    <source>
        <dbReference type="UniProtKB" id="Q91ZA8"/>
    </source>
</evidence>
<evidence type="ECO:0000305" key="5"/>
<sequence>MSQAEMSTCSTPHTQRVFQEAVRKGNTKELQSLLQNMTNCEFNVNSFGPEGQTALHQSVIDGNLELVKLLVKFGADIRLANRDGWSALHIAAYGGHQDIVLYLITKAKYSSSSR</sequence>
<comment type="function">
    <text evidence="2 3 4">Promotes loss of intracellular domain (ICD) of Notch1 in embryos. By down-regulating ICD levels, could function as a negative feedback regulator of Notch signaling that attenuates ICD-mediated transcription (By similarity). Involved in angiogenesis. May be involved in somitogenesis (By similarity).</text>
</comment>
<comment type="subunit">
    <text evidence="1">Forms a ternary complex with the intracellular domain (ICD) of notch1 and rbpj/suh.</text>
</comment>
<comment type="similarity">
    <text evidence="5">Belongs to the NRARP family.</text>
</comment>
<name>NRARP_XENTR</name>
<proteinExistence type="inferred from homology"/>
<protein>
    <recommendedName>
        <fullName>Notch-regulated ankyrin repeat-containing protein</fullName>
    </recommendedName>
</protein>
<accession>A4II29</accession>
<dbReference type="EMBL" id="BC135819">
    <property type="protein sequence ID" value="AAI35820.1"/>
    <property type="molecule type" value="mRNA"/>
</dbReference>
<dbReference type="RefSeq" id="NP_001096349.1">
    <property type="nucleotide sequence ID" value="NM_001102879.1"/>
</dbReference>
<dbReference type="SMR" id="A4II29"/>
<dbReference type="FunCoup" id="A4II29">
    <property type="interactions" value="9"/>
</dbReference>
<dbReference type="PaxDb" id="8364-ENSXETP00000008564"/>
<dbReference type="DNASU" id="100124939"/>
<dbReference type="GeneID" id="100124939"/>
<dbReference type="KEGG" id="xtr:100124939"/>
<dbReference type="CTD" id="441478"/>
<dbReference type="Xenbase" id="XB-GENE-996958">
    <property type="gene designation" value="nrarp"/>
</dbReference>
<dbReference type="eggNOG" id="KOG0505">
    <property type="taxonomic scope" value="Eukaryota"/>
</dbReference>
<dbReference type="HOGENOM" id="CLU_000134_41_1_1"/>
<dbReference type="InParanoid" id="A4II29"/>
<dbReference type="OMA" id="MRTETAH"/>
<dbReference type="OrthoDB" id="5314041at2759"/>
<dbReference type="PhylomeDB" id="A4II29"/>
<dbReference type="Proteomes" id="UP000008143">
    <property type="component" value="Chromosome 8"/>
</dbReference>
<dbReference type="GO" id="GO:0007219">
    <property type="term" value="P:Notch signaling pathway"/>
    <property type="evidence" value="ECO:0000250"/>
    <property type="project" value="UniProtKB"/>
</dbReference>
<dbReference type="FunFam" id="1.25.40.20:FF:000085">
    <property type="entry name" value="Notch-regulated ankyrin repeat-containing protein A"/>
    <property type="match status" value="1"/>
</dbReference>
<dbReference type="Gene3D" id="1.25.40.20">
    <property type="entry name" value="Ankyrin repeat-containing domain"/>
    <property type="match status" value="1"/>
</dbReference>
<dbReference type="InterPro" id="IPR002110">
    <property type="entry name" value="Ankyrin_rpt"/>
</dbReference>
<dbReference type="InterPro" id="IPR036770">
    <property type="entry name" value="Ankyrin_rpt-contain_sf"/>
</dbReference>
<dbReference type="InterPro" id="IPR051226">
    <property type="entry name" value="PP1_Regulatory_Subunit"/>
</dbReference>
<dbReference type="PANTHER" id="PTHR24179:SF21">
    <property type="entry name" value="MYOSIN BINDING SUBUNIT, ISOFORM O"/>
    <property type="match status" value="1"/>
</dbReference>
<dbReference type="PANTHER" id="PTHR24179">
    <property type="entry name" value="PROTEIN PHOSPHATASE 1 REGULATORY SUBUNIT 12"/>
    <property type="match status" value="1"/>
</dbReference>
<dbReference type="Pfam" id="PF12796">
    <property type="entry name" value="Ank_2"/>
    <property type="match status" value="1"/>
</dbReference>
<dbReference type="SMART" id="SM00248">
    <property type="entry name" value="ANK"/>
    <property type="match status" value="2"/>
</dbReference>
<dbReference type="SUPFAM" id="SSF48403">
    <property type="entry name" value="Ankyrin repeat"/>
    <property type="match status" value="1"/>
</dbReference>
<dbReference type="PROSITE" id="PS50297">
    <property type="entry name" value="ANK_REP_REGION"/>
    <property type="match status" value="1"/>
</dbReference>
<dbReference type="PROSITE" id="PS50088">
    <property type="entry name" value="ANK_REPEAT"/>
    <property type="match status" value="2"/>
</dbReference>